<sequence length="101" mass="10747">MIPGEIIAASGDIELNAGAPTVTLEVSNTGDRPVQVGSHYHFAETNAGLSFDRAAAHGKRLDIPSGTAVRFEPGQTRSVTLIPLSGRREVYGFRQLVMGKL</sequence>
<protein>
    <recommendedName>
        <fullName evidence="1">Urease subunit beta</fullName>
        <ecNumber evidence="1">3.5.1.5</ecNumber>
    </recommendedName>
    <alternativeName>
        <fullName evidence="1">Urea amidohydrolase subunit beta</fullName>
    </alternativeName>
</protein>
<feature type="chain" id="PRO_0000239896" description="Urease subunit beta">
    <location>
        <begin position="1"/>
        <end position="101"/>
    </location>
</feature>
<organism>
    <name type="scientific">Rhizobium etli (strain ATCC 51251 / DSM 11541 / JCM 21823 / NBRC 15573 / CFN 42)</name>
    <dbReference type="NCBI Taxonomy" id="347834"/>
    <lineage>
        <taxon>Bacteria</taxon>
        <taxon>Pseudomonadati</taxon>
        <taxon>Pseudomonadota</taxon>
        <taxon>Alphaproteobacteria</taxon>
        <taxon>Hyphomicrobiales</taxon>
        <taxon>Rhizobiaceae</taxon>
        <taxon>Rhizobium/Agrobacterium group</taxon>
        <taxon>Rhizobium</taxon>
    </lineage>
</organism>
<accession>Q2K514</accession>
<comment type="catalytic activity">
    <reaction evidence="1">
        <text>urea + 2 H2O + H(+) = hydrogencarbonate + 2 NH4(+)</text>
        <dbReference type="Rhea" id="RHEA:20557"/>
        <dbReference type="ChEBI" id="CHEBI:15377"/>
        <dbReference type="ChEBI" id="CHEBI:15378"/>
        <dbReference type="ChEBI" id="CHEBI:16199"/>
        <dbReference type="ChEBI" id="CHEBI:17544"/>
        <dbReference type="ChEBI" id="CHEBI:28938"/>
        <dbReference type="EC" id="3.5.1.5"/>
    </reaction>
</comment>
<comment type="pathway">
    <text evidence="1">Nitrogen metabolism; urea degradation; CO(2) and NH(3) from urea (urease route): step 1/1.</text>
</comment>
<comment type="subunit">
    <text evidence="1">Heterotrimer of UreA (gamma), UreB (beta) and UreC (alpha) subunits. Three heterotrimers associate to form the active enzyme.</text>
</comment>
<comment type="subcellular location">
    <subcellularLocation>
        <location evidence="1">Cytoplasm</location>
    </subcellularLocation>
</comment>
<comment type="similarity">
    <text evidence="1">Belongs to the urease beta subunit family.</text>
</comment>
<dbReference type="EC" id="3.5.1.5" evidence="1"/>
<dbReference type="EMBL" id="CP000133">
    <property type="protein sequence ID" value="ABC92072.1"/>
    <property type="molecule type" value="Genomic_DNA"/>
</dbReference>
<dbReference type="RefSeq" id="WP_011426542.1">
    <property type="nucleotide sequence ID" value="NC_007761.1"/>
</dbReference>
<dbReference type="SMR" id="Q2K514"/>
<dbReference type="KEGG" id="ret:RHE_CH03308"/>
<dbReference type="eggNOG" id="COG0832">
    <property type="taxonomic scope" value="Bacteria"/>
</dbReference>
<dbReference type="HOGENOM" id="CLU_129707_1_1_5"/>
<dbReference type="OrthoDB" id="9797217at2"/>
<dbReference type="UniPathway" id="UPA00258">
    <property type="reaction ID" value="UER00370"/>
</dbReference>
<dbReference type="Proteomes" id="UP000001936">
    <property type="component" value="Chromosome"/>
</dbReference>
<dbReference type="GO" id="GO:0035550">
    <property type="term" value="C:urease complex"/>
    <property type="evidence" value="ECO:0007669"/>
    <property type="project" value="InterPro"/>
</dbReference>
<dbReference type="GO" id="GO:0009039">
    <property type="term" value="F:urease activity"/>
    <property type="evidence" value="ECO:0007669"/>
    <property type="project" value="UniProtKB-UniRule"/>
</dbReference>
<dbReference type="GO" id="GO:0043419">
    <property type="term" value="P:urea catabolic process"/>
    <property type="evidence" value="ECO:0007669"/>
    <property type="project" value="UniProtKB-UniRule"/>
</dbReference>
<dbReference type="CDD" id="cd00407">
    <property type="entry name" value="Urease_beta"/>
    <property type="match status" value="1"/>
</dbReference>
<dbReference type="FunFam" id="2.10.150.10:FF:000001">
    <property type="entry name" value="Urease subunit beta"/>
    <property type="match status" value="1"/>
</dbReference>
<dbReference type="Gene3D" id="2.10.150.10">
    <property type="entry name" value="Urease, beta subunit"/>
    <property type="match status" value="1"/>
</dbReference>
<dbReference type="HAMAP" id="MF_01954">
    <property type="entry name" value="Urease_beta"/>
    <property type="match status" value="1"/>
</dbReference>
<dbReference type="InterPro" id="IPR002019">
    <property type="entry name" value="Urease_beta-like"/>
</dbReference>
<dbReference type="InterPro" id="IPR036461">
    <property type="entry name" value="Urease_betasu_sf"/>
</dbReference>
<dbReference type="InterPro" id="IPR050069">
    <property type="entry name" value="Urease_subunit"/>
</dbReference>
<dbReference type="NCBIfam" id="NF009682">
    <property type="entry name" value="PRK13203.1"/>
    <property type="match status" value="1"/>
</dbReference>
<dbReference type="NCBIfam" id="TIGR00192">
    <property type="entry name" value="urease_beta"/>
    <property type="match status" value="1"/>
</dbReference>
<dbReference type="PANTHER" id="PTHR33569">
    <property type="entry name" value="UREASE"/>
    <property type="match status" value="1"/>
</dbReference>
<dbReference type="PANTHER" id="PTHR33569:SF1">
    <property type="entry name" value="UREASE"/>
    <property type="match status" value="1"/>
</dbReference>
<dbReference type="Pfam" id="PF00699">
    <property type="entry name" value="Urease_beta"/>
    <property type="match status" value="1"/>
</dbReference>
<dbReference type="SUPFAM" id="SSF51278">
    <property type="entry name" value="Urease, beta-subunit"/>
    <property type="match status" value="1"/>
</dbReference>
<proteinExistence type="inferred from homology"/>
<reference key="1">
    <citation type="journal article" date="2006" name="Proc. Natl. Acad. Sci. U.S.A.">
        <title>The partitioned Rhizobium etli genome: genetic and metabolic redundancy in seven interacting replicons.</title>
        <authorList>
            <person name="Gonzalez V."/>
            <person name="Santamaria R.I."/>
            <person name="Bustos P."/>
            <person name="Hernandez-Gonzalez I."/>
            <person name="Medrano-Soto A."/>
            <person name="Moreno-Hagelsieb G."/>
            <person name="Janga S.C."/>
            <person name="Ramirez M.A."/>
            <person name="Jimenez-Jacinto V."/>
            <person name="Collado-Vides J."/>
            <person name="Davila G."/>
        </authorList>
    </citation>
    <scope>NUCLEOTIDE SEQUENCE [LARGE SCALE GENOMIC DNA]</scope>
    <source>
        <strain>ATCC 51251 / DSM 11541 / JCM 21823 / NBRC 15573 / CFN 42</strain>
    </source>
</reference>
<evidence type="ECO:0000255" key="1">
    <source>
        <dbReference type="HAMAP-Rule" id="MF_01954"/>
    </source>
</evidence>
<gene>
    <name evidence="1" type="primary">ureB</name>
    <name type="ordered locus">RHE_CH03308</name>
</gene>
<name>URE2_RHIEC</name>
<keyword id="KW-0963">Cytoplasm</keyword>
<keyword id="KW-0378">Hydrolase</keyword>
<keyword id="KW-1185">Reference proteome</keyword>